<dbReference type="EMBL" id="M91809">
    <property type="protein sequence ID" value="AAA27322.1"/>
    <property type="molecule type" value="Genomic_DNA"/>
</dbReference>
<dbReference type="SMR" id="P0A317"/>
<dbReference type="KEGG" id="synw:SynWH8103_02304"/>
<dbReference type="OrthoDB" id="466183at2"/>
<dbReference type="GO" id="GO:0030089">
    <property type="term" value="C:phycobilisome"/>
    <property type="evidence" value="ECO:0007669"/>
    <property type="project" value="UniProtKB-KW"/>
</dbReference>
<dbReference type="GO" id="GO:0031676">
    <property type="term" value="C:plasma membrane-derived thylakoid membrane"/>
    <property type="evidence" value="ECO:0007669"/>
    <property type="project" value="UniProtKB-SubCell"/>
</dbReference>
<dbReference type="GO" id="GO:0015979">
    <property type="term" value="P:photosynthesis"/>
    <property type="evidence" value="ECO:0007669"/>
    <property type="project" value="UniProtKB-KW"/>
</dbReference>
<dbReference type="Gene3D" id="1.10.490.20">
    <property type="entry name" value="Phycocyanins"/>
    <property type="match status" value="1"/>
</dbReference>
<dbReference type="InterPro" id="IPR009050">
    <property type="entry name" value="Globin-like_sf"/>
</dbReference>
<dbReference type="InterPro" id="IPR012128">
    <property type="entry name" value="Phycobilisome_asu/bsu"/>
</dbReference>
<dbReference type="InterPro" id="IPR038719">
    <property type="entry name" value="Phycobilisome_asu/bsu_sf"/>
</dbReference>
<dbReference type="PANTHER" id="PTHR34011:SF4">
    <property type="entry name" value="C-PHYCOCYANIN ALPHA SUBUNIT"/>
    <property type="match status" value="1"/>
</dbReference>
<dbReference type="PANTHER" id="PTHR34011">
    <property type="entry name" value="PHYCOBILISOME 32.1 KDA LINKER POLYPEPTIDE, PHYCOCYANIN-ASSOCIATED, ROD 2-RELATED"/>
    <property type="match status" value="1"/>
</dbReference>
<dbReference type="Pfam" id="PF00502">
    <property type="entry name" value="Phycobilisome"/>
    <property type="match status" value="1"/>
</dbReference>
<dbReference type="PIRSF" id="PIRSF000081">
    <property type="entry name" value="Phycocyanin"/>
    <property type="match status" value="1"/>
</dbReference>
<dbReference type="SUPFAM" id="SSF46458">
    <property type="entry name" value="Globin-like"/>
    <property type="match status" value="1"/>
</dbReference>
<comment type="function">
    <text>Light-harvesting photosynthetic bile pigment-protein from the phycobiliprotein complex.</text>
</comment>
<comment type="subunit">
    <text>Heterodimer of an alpha and a beta chain.</text>
</comment>
<comment type="subcellular location">
    <subcellularLocation>
        <location>Cellular thylakoid membrane</location>
        <topology>Peripheral membrane protein</topology>
        <orientation>Cytoplasmic side</orientation>
    </subcellularLocation>
    <text>Forms the periphery of the phycobilisome rod.</text>
</comment>
<comment type="PTM">
    <text>Contains three covalently linked phycourobilin chromophores.</text>
</comment>
<comment type="similarity">
    <text evidence="1">Belongs to the phycobiliprotein family.</text>
</comment>
<sequence>MKSVITTVVGAADSASRFPSASDMESVQGSIQRAAARLEAAEKLAGNYDQVAQEAVDAVYNQYPNGATGRQPRKCATEGKEKCKRDFVHYLRLINYCLVTGGTGPLDELAINGQKEVYKALSIDAGTYVAGFSHLRSRGCAPRDMSAQALTAYNQLLDYVINSLG</sequence>
<proteinExistence type="evidence at protein level"/>
<protein>
    <recommendedName>
        <fullName>C-phycoerythrin class 2 subunit alpha</fullName>
    </recommendedName>
    <alternativeName>
        <fullName>C-phycoerythrin class II alpha chain</fullName>
    </alternativeName>
</protein>
<organism>
    <name type="scientific">Synechococcus sp. (strain WH8103)</name>
    <dbReference type="NCBI Taxonomy" id="29410"/>
    <lineage>
        <taxon>Bacteria</taxon>
        <taxon>Bacillati</taxon>
        <taxon>Cyanobacteriota</taxon>
        <taxon>Cyanophyceae</taxon>
        <taxon>Synechococcales</taxon>
        <taxon>Synechococcaceae</taxon>
        <taxon>Synechococcus</taxon>
    </lineage>
</organism>
<keyword id="KW-0042">Antenna complex</keyword>
<keyword id="KW-0089">Bile pigment</keyword>
<keyword id="KW-0157">Chromophore</keyword>
<keyword id="KW-0903">Direct protein sequencing</keyword>
<keyword id="KW-0249">Electron transport</keyword>
<keyword id="KW-0472">Membrane</keyword>
<keyword id="KW-0602">Photosynthesis</keyword>
<keyword id="KW-0605">Phycobilisome</keyword>
<keyword id="KW-0793">Thylakoid</keyword>
<keyword id="KW-0813">Transport</keyword>
<gene>
    <name type="primary">mpeA</name>
</gene>
<reference key="1">
    <citation type="journal article" date="1992" name="Plant Mol. Biol.">
        <title>Sequence comparison of two highly homologous phycoerythrins differing in bilin composition.</title>
        <authorList>
            <person name="de Lorimier R."/>
            <person name="Chen C.-C.J."/>
            <person name="Glazer A.N."/>
        </authorList>
    </citation>
    <scope>NUCLEOTIDE SEQUENCE [GENOMIC DNA]</scope>
</reference>
<reference key="2">
    <citation type="journal article" date="1991" name="J. Biol. Chem.">
        <title>Phycoerythrins of marine unicellular cyanobacteria. I. Bilin types and locations and energy transfer pathways in Synechococcus spp. phycoerythrins.</title>
        <authorList>
            <person name="Ong L.J."/>
            <person name="Glazer A.N."/>
        </authorList>
    </citation>
    <scope>PARTIAL PROTEIN SEQUENCE</scope>
    <scope>CHROMOPHORE BINDING</scope>
</reference>
<evidence type="ECO:0000305" key="1"/>
<accession>P0A317</accession>
<accession>P37720</accession>
<name>PHEA2_SYNPZ</name>
<feature type="chain" id="PRO_0000199187" description="C-phycoerythrin class 2 subunit alpha">
    <location>
        <begin position="1"/>
        <end position="165"/>
    </location>
</feature>
<feature type="binding site" description="covalent">
    <location>
        <position position="75"/>
    </location>
    <ligand>
        <name>phycourobilin</name>
        <dbReference type="ChEBI" id="CHEBI:189062"/>
        <label>1</label>
    </ligand>
</feature>
<feature type="binding site" description="covalent">
    <location>
        <position position="83"/>
    </location>
    <ligand>
        <name>phycourobilin</name>
        <dbReference type="ChEBI" id="CHEBI:189062"/>
        <label>2</label>
    </ligand>
</feature>
<feature type="binding site" description="covalent">
    <location>
        <position position="140"/>
    </location>
    <ligand>
        <name>phycourobilin</name>
        <dbReference type="ChEBI" id="CHEBI:189062"/>
        <label>3</label>
    </ligand>
</feature>